<proteinExistence type="inferred from homology"/>
<keyword id="KW-0687">Ribonucleoprotein</keyword>
<keyword id="KW-0689">Ribosomal protein</keyword>
<keyword id="KW-0694">RNA-binding</keyword>
<keyword id="KW-0699">rRNA-binding</keyword>
<feature type="chain" id="PRO_1000166295" description="Large ribosomal subunit protein uL15">
    <location>
        <begin position="1"/>
        <end position="144"/>
    </location>
</feature>
<feature type="region of interest" description="Disordered" evidence="2">
    <location>
        <begin position="1"/>
        <end position="54"/>
    </location>
</feature>
<feature type="compositionally biased region" description="Gly residues" evidence="2">
    <location>
        <begin position="21"/>
        <end position="31"/>
    </location>
</feature>
<dbReference type="EMBL" id="CU928162">
    <property type="protein sequence ID" value="CAR10103.2"/>
    <property type="molecule type" value="Genomic_DNA"/>
</dbReference>
<dbReference type="RefSeq" id="WP_001238917.1">
    <property type="nucleotide sequence ID" value="NC_011745.1"/>
</dbReference>
<dbReference type="SMR" id="B7N185"/>
<dbReference type="GeneID" id="93778686"/>
<dbReference type="KEGG" id="ecq:ECED1_3964"/>
<dbReference type="HOGENOM" id="CLU_055188_4_2_6"/>
<dbReference type="Proteomes" id="UP000000748">
    <property type="component" value="Chromosome"/>
</dbReference>
<dbReference type="GO" id="GO:0022625">
    <property type="term" value="C:cytosolic large ribosomal subunit"/>
    <property type="evidence" value="ECO:0007669"/>
    <property type="project" value="TreeGrafter"/>
</dbReference>
<dbReference type="GO" id="GO:0019843">
    <property type="term" value="F:rRNA binding"/>
    <property type="evidence" value="ECO:0007669"/>
    <property type="project" value="UniProtKB-UniRule"/>
</dbReference>
<dbReference type="GO" id="GO:0003735">
    <property type="term" value="F:structural constituent of ribosome"/>
    <property type="evidence" value="ECO:0007669"/>
    <property type="project" value="InterPro"/>
</dbReference>
<dbReference type="GO" id="GO:0006412">
    <property type="term" value="P:translation"/>
    <property type="evidence" value="ECO:0007669"/>
    <property type="project" value="UniProtKB-UniRule"/>
</dbReference>
<dbReference type="FunFam" id="3.100.10.10:FF:000003">
    <property type="entry name" value="50S ribosomal protein L15"/>
    <property type="match status" value="1"/>
</dbReference>
<dbReference type="Gene3D" id="3.100.10.10">
    <property type="match status" value="1"/>
</dbReference>
<dbReference type="HAMAP" id="MF_01341">
    <property type="entry name" value="Ribosomal_uL15"/>
    <property type="match status" value="1"/>
</dbReference>
<dbReference type="InterPro" id="IPR030878">
    <property type="entry name" value="Ribosomal_uL15"/>
</dbReference>
<dbReference type="InterPro" id="IPR021131">
    <property type="entry name" value="Ribosomal_uL15/eL18"/>
</dbReference>
<dbReference type="InterPro" id="IPR036227">
    <property type="entry name" value="Ribosomal_uL15/eL18_sf"/>
</dbReference>
<dbReference type="InterPro" id="IPR005749">
    <property type="entry name" value="Ribosomal_uL15_bac-type"/>
</dbReference>
<dbReference type="InterPro" id="IPR001196">
    <property type="entry name" value="Ribosomal_uL15_CS"/>
</dbReference>
<dbReference type="NCBIfam" id="TIGR01071">
    <property type="entry name" value="rplO_bact"/>
    <property type="match status" value="1"/>
</dbReference>
<dbReference type="PANTHER" id="PTHR12934">
    <property type="entry name" value="50S RIBOSOMAL PROTEIN L15"/>
    <property type="match status" value="1"/>
</dbReference>
<dbReference type="PANTHER" id="PTHR12934:SF11">
    <property type="entry name" value="LARGE RIBOSOMAL SUBUNIT PROTEIN UL15M"/>
    <property type="match status" value="1"/>
</dbReference>
<dbReference type="Pfam" id="PF00828">
    <property type="entry name" value="Ribosomal_L27A"/>
    <property type="match status" value="1"/>
</dbReference>
<dbReference type="SUPFAM" id="SSF52080">
    <property type="entry name" value="Ribosomal proteins L15p and L18e"/>
    <property type="match status" value="1"/>
</dbReference>
<dbReference type="PROSITE" id="PS00475">
    <property type="entry name" value="RIBOSOMAL_L15"/>
    <property type="match status" value="1"/>
</dbReference>
<organism>
    <name type="scientific">Escherichia coli O81 (strain ED1a)</name>
    <dbReference type="NCBI Taxonomy" id="585397"/>
    <lineage>
        <taxon>Bacteria</taxon>
        <taxon>Pseudomonadati</taxon>
        <taxon>Pseudomonadota</taxon>
        <taxon>Gammaproteobacteria</taxon>
        <taxon>Enterobacterales</taxon>
        <taxon>Enterobacteriaceae</taxon>
        <taxon>Escherichia</taxon>
    </lineage>
</organism>
<gene>
    <name evidence="1" type="primary">rplO</name>
    <name type="ordered locus">ECED1_3964</name>
</gene>
<reference key="1">
    <citation type="journal article" date="2009" name="PLoS Genet.">
        <title>Organised genome dynamics in the Escherichia coli species results in highly diverse adaptive paths.</title>
        <authorList>
            <person name="Touchon M."/>
            <person name="Hoede C."/>
            <person name="Tenaillon O."/>
            <person name="Barbe V."/>
            <person name="Baeriswyl S."/>
            <person name="Bidet P."/>
            <person name="Bingen E."/>
            <person name="Bonacorsi S."/>
            <person name="Bouchier C."/>
            <person name="Bouvet O."/>
            <person name="Calteau A."/>
            <person name="Chiapello H."/>
            <person name="Clermont O."/>
            <person name="Cruveiller S."/>
            <person name="Danchin A."/>
            <person name="Diard M."/>
            <person name="Dossat C."/>
            <person name="Karoui M.E."/>
            <person name="Frapy E."/>
            <person name="Garry L."/>
            <person name="Ghigo J.M."/>
            <person name="Gilles A.M."/>
            <person name="Johnson J."/>
            <person name="Le Bouguenec C."/>
            <person name="Lescat M."/>
            <person name="Mangenot S."/>
            <person name="Martinez-Jehanne V."/>
            <person name="Matic I."/>
            <person name="Nassif X."/>
            <person name="Oztas S."/>
            <person name="Petit M.A."/>
            <person name="Pichon C."/>
            <person name="Rouy Z."/>
            <person name="Ruf C.S."/>
            <person name="Schneider D."/>
            <person name="Tourret J."/>
            <person name="Vacherie B."/>
            <person name="Vallenet D."/>
            <person name="Medigue C."/>
            <person name="Rocha E.P.C."/>
            <person name="Denamur E."/>
        </authorList>
    </citation>
    <scope>NUCLEOTIDE SEQUENCE [LARGE SCALE GENOMIC DNA]</scope>
    <source>
        <strain>ED1a</strain>
    </source>
</reference>
<evidence type="ECO:0000255" key="1">
    <source>
        <dbReference type="HAMAP-Rule" id="MF_01341"/>
    </source>
</evidence>
<evidence type="ECO:0000256" key="2">
    <source>
        <dbReference type="SAM" id="MobiDB-lite"/>
    </source>
</evidence>
<evidence type="ECO:0000305" key="3"/>
<protein>
    <recommendedName>
        <fullName evidence="1">Large ribosomal subunit protein uL15</fullName>
    </recommendedName>
    <alternativeName>
        <fullName evidence="3">50S ribosomal protein L15</fullName>
    </alternativeName>
</protein>
<comment type="function">
    <text evidence="1">Binds to the 23S rRNA.</text>
</comment>
<comment type="subunit">
    <text evidence="1">Part of the 50S ribosomal subunit.</text>
</comment>
<comment type="similarity">
    <text evidence="1">Belongs to the universal ribosomal protein uL15 family.</text>
</comment>
<accession>B7N185</accession>
<name>RL15_ECO81</name>
<sequence length="144" mass="14966">MRLNTLSPAEGSKKAGKRLGRGIGSGLGKTGGRGHKGQKSRSGGGVRRGFEGGQMPLYRRLPKFGFTSRKAAITAEVRLSDLAKVEGGVVDLNTLKAANIIGIQIEFAKVILAGEVTTPVTVRGLRVTKGARAAIEAAGGKIEE</sequence>